<feature type="chain" id="PRO_1000197066" description="tRNA modification GTPase MnmE">
    <location>
        <begin position="1"/>
        <end position="442"/>
    </location>
</feature>
<feature type="domain" description="TrmE-type G">
    <location>
        <begin position="217"/>
        <end position="367"/>
    </location>
</feature>
<feature type="binding site" evidence="1">
    <location>
        <position position="24"/>
    </location>
    <ligand>
        <name>(6S)-5-formyl-5,6,7,8-tetrahydrofolate</name>
        <dbReference type="ChEBI" id="CHEBI:57457"/>
    </ligand>
</feature>
<feature type="binding site" evidence="1">
    <location>
        <position position="82"/>
    </location>
    <ligand>
        <name>(6S)-5-formyl-5,6,7,8-tetrahydrofolate</name>
        <dbReference type="ChEBI" id="CHEBI:57457"/>
    </ligand>
</feature>
<feature type="binding site" evidence="1">
    <location>
        <position position="120"/>
    </location>
    <ligand>
        <name>(6S)-5-formyl-5,6,7,8-tetrahydrofolate</name>
        <dbReference type="ChEBI" id="CHEBI:57457"/>
    </ligand>
</feature>
<feature type="binding site" evidence="1">
    <location>
        <begin position="227"/>
        <end position="232"/>
    </location>
    <ligand>
        <name>GTP</name>
        <dbReference type="ChEBI" id="CHEBI:37565"/>
    </ligand>
</feature>
<feature type="binding site" evidence="1">
    <location>
        <position position="231"/>
    </location>
    <ligand>
        <name>Mg(2+)</name>
        <dbReference type="ChEBI" id="CHEBI:18420"/>
    </ligand>
</feature>
<feature type="binding site" evidence="1">
    <location>
        <begin position="246"/>
        <end position="252"/>
    </location>
    <ligand>
        <name>GTP</name>
        <dbReference type="ChEBI" id="CHEBI:37565"/>
    </ligand>
</feature>
<feature type="binding site" evidence="1">
    <location>
        <position position="252"/>
    </location>
    <ligand>
        <name>Mg(2+)</name>
        <dbReference type="ChEBI" id="CHEBI:18420"/>
    </ligand>
</feature>
<feature type="binding site" evidence="1">
    <location>
        <begin position="271"/>
        <end position="274"/>
    </location>
    <ligand>
        <name>GTP</name>
        <dbReference type="ChEBI" id="CHEBI:37565"/>
    </ligand>
</feature>
<feature type="binding site" evidence="1">
    <location>
        <position position="442"/>
    </location>
    <ligand>
        <name>(6S)-5-formyl-5,6,7,8-tetrahydrofolate</name>
        <dbReference type="ChEBI" id="CHEBI:57457"/>
    </ligand>
</feature>
<proteinExistence type="inferred from homology"/>
<name>MNME_WOLWR</name>
<evidence type="ECO:0000255" key="1">
    <source>
        <dbReference type="HAMAP-Rule" id="MF_00379"/>
    </source>
</evidence>
<protein>
    <recommendedName>
        <fullName evidence="1">tRNA modification GTPase MnmE</fullName>
        <ecNumber evidence="1">3.6.-.-</ecNumber>
    </recommendedName>
</protein>
<reference key="1">
    <citation type="journal article" date="2009" name="Proc. Natl. Acad. Sci. U.S.A.">
        <title>The mosaic genome structure of the Wolbachia wRi strain infecting Drosophila simulans.</title>
        <authorList>
            <person name="Klasson L."/>
            <person name="Westberg J."/>
            <person name="Sapountzis P."/>
            <person name="Naeslund K."/>
            <person name="Lutnaes Y."/>
            <person name="Darby A.C."/>
            <person name="Veneti Z."/>
            <person name="Chen L."/>
            <person name="Braig H.R."/>
            <person name="Garrett R."/>
            <person name="Bourtzis K."/>
            <person name="Andersson S.G."/>
        </authorList>
    </citation>
    <scope>NUCLEOTIDE SEQUENCE [LARGE SCALE GENOMIC DNA]</scope>
    <source>
        <strain>wRi</strain>
    </source>
</reference>
<comment type="function">
    <text evidence="1">Exhibits a very high intrinsic GTPase hydrolysis rate. Involved in the addition of a carboxymethylaminomethyl (cmnm) group at the wobble position (U34) of certain tRNAs, forming tRNA-cmnm(5)s(2)U34.</text>
</comment>
<comment type="cofactor">
    <cofactor evidence="1">
        <name>K(+)</name>
        <dbReference type="ChEBI" id="CHEBI:29103"/>
    </cofactor>
    <text evidence="1">Binds 1 potassium ion per subunit.</text>
</comment>
<comment type="subunit">
    <text evidence="1">Homodimer. Heterotetramer of two MnmE and two MnmG subunits.</text>
</comment>
<comment type="subcellular location">
    <subcellularLocation>
        <location evidence="1">Cytoplasm</location>
    </subcellularLocation>
</comment>
<comment type="similarity">
    <text evidence="1">Belongs to the TRAFAC class TrmE-Era-EngA-EngB-Septin-like GTPase superfamily. TrmE GTPase family.</text>
</comment>
<sequence length="442" mass="49816">MTNTNETIFALSTVFGKSGVAVIRISGNYALKALNHFHIKKEIKPRFATLVDLYDDSSQLIDNGIIIYFPAPNSFTGEDVIELQVHGSKAVIKIILEELSKVFVMAKPGEFSLRAFLNGKFDLTQIEGIADLIDAETKMQAKQAIKQISGELERLYSNWRQRLITIQSKIEAYIDFPEDIWAEKSELEKINNEVQSLVRLIQEHLNDNRRGERLREGLHIVITGEPNVGKSTLFNFLAKRDIAIVSEYAGTTRDILEAHIDIGGYPIILSDTAGIRESSDPIELEGISRAKKRSFEADLRIELFPFEQRPNINCNVVNSDTIYVLSKADDVINNHDIKINGIDLLPVSILKGIGTNKLISLIKEKAEEKFGHDRDTPVITRQRHRNHMQKALEHLQRFNIDNPIELISEDLRLAAFELGAVIGIIDVEEILSSVFSNFCVGK</sequence>
<accession>C0R405</accession>
<dbReference type="EC" id="3.6.-.-" evidence="1"/>
<dbReference type="EMBL" id="CP001391">
    <property type="protein sequence ID" value="ACN95647.1"/>
    <property type="molecule type" value="Genomic_DNA"/>
</dbReference>
<dbReference type="RefSeq" id="WP_012673325.1">
    <property type="nucleotide sequence ID" value="NZ_MKIF01000064.1"/>
</dbReference>
<dbReference type="SMR" id="C0R405"/>
<dbReference type="STRING" id="66084.WRi_009300"/>
<dbReference type="KEGG" id="wri:WRi_009300"/>
<dbReference type="HOGENOM" id="CLU_019624_3_1_5"/>
<dbReference type="Proteomes" id="UP000001293">
    <property type="component" value="Chromosome"/>
</dbReference>
<dbReference type="GO" id="GO:0005737">
    <property type="term" value="C:cytoplasm"/>
    <property type="evidence" value="ECO:0007669"/>
    <property type="project" value="UniProtKB-SubCell"/>
</dbReference>
<dbReference type="GO" id="GO:0005525">
    <property type="term" value="F:GTP binding"/>
    <property type="evidence" value="ECO:0007669"/>
    <property type="project" value="UniProtKB-UniRule"/>
</dbReference>
<dbReference type="GO" id="GO:0003924">
    <property type="term" value="F:GTPase activity"/>
    <property type="evidence" value="ECO:0007669"/>
    <property type="project" value="UniProtKB-UniRule"/>
</dbReference>
<dbReference type="GO" id="GO:0046872">
    <property type="term" value="F:metal ion binding"/>
    <property type="evidence" value="ECO:0007669"/>
    <property type="project" value="UniProtKB-KW"/>
</dbReference>
<dbReference type="GO" id="GO:0030488">
    <property type="term" value="P:tRNA methylation"/>
    <property type="evidence" value="ECO:0007669"/>
    <property type="project" value="TreeGrafter"/>
</dbReference>
<dbReference type="GO" id="GO:0002098">
    <property type="term" value="P:tRNA wobble uridine modification"/>
    <property type="evidence" value="ECO:0007669"/>
    <property type="project" value="TreeGrafter"/>
</dbReference>
<dbReference type="CDD" id="cd04164">
    <property type="entry name" value="trmE"/>
    <property type="match status" value="1"/>
</dbReference>
<dbReference type="CDD" id="cd14858">
    <property type="entry name" value="TrmE_N"/>
    <property type="match status" value="1"/>
</dbReference>
<dbReference type="FunFam" id="3.30.1360.120:FF:000007">
    <property type="entry name" value="tRNA modification GTPase GTPBP3, mitochondrial"/>
    <property type="match status" value="1"/>
</dbReference>
<dbReference type="Gene3D" id="3.40.50.300">
    <property type="entry name" value="P-loop containing nucleotide triphosphate hydrolases"/>
    <property type="match status" value="1"/>
</dbReference>
<dbReference type="Gene3D" id="3.30.1360.120">
    <property type="entry name" value="Probable tRNA modification gtpase trme, domain 1"/>
    <property type="match status" value="1"/>
</dbReference>
<dbReference type="Gene3D" id="1.20.120.430">
    <property type="entry name" value="tRNA modification GTPase MnmE domain 2"/>
    <property type="match status" value="1"/>
</dbReference>
<dbReference type="HAMAP" id="MF_00379">
    <property type="entry name" value="GTPase_MnmE"/>
    <property type="match status" value="1"/>
</dbReference>
<dbReference type="InterPro" id="IPR031168">
    <property type="entry name" value="G_TrmE"/>
</dbReference>
<dbReference type="InterPro" id="IPR006073">
    <property type="entry name" value="GTP-bd"/>
</dbReference>
<dbReference type="InterPro" id="IPR018948">
    <property type="entry name" value="GTP-bd_TrmE_N"/>
</dbReference>
<dbReference type="InterPro" id="IPR004520">
    <property type="entry name" value="GTPase_MnmE"/>
</dbReference>
<dbReference type="InterPro" id="IPR027368">
    <property type="entry name" value="MnmE_dom2"/>
</dbReference>
<dbReference type="InterPro" id="IPR025867">
    <property type="entry name" value="MnmE_helical"/>
</dbReference>
<dbReference type="InterPro" id="IPR027417">
    <property type="entry name" value="P-loop_NTPase"/>
</dbReference>
<dbReference type="InterPro" id="IPR005225">
    <property type="entry name" value="Small_GTP-bd"/>
</dbReference>
<dbReference type="InterPro" id="IPR027266">
    <property type="entry name" value="TrmE/GcvT_dom1"/>
</dbReference>
<dbReference type="NCBIfam" id="TIGR00450">
    <property type="entry name" value="mnmE_trmE_thdF"/>
    <property type="match status" value="1"/>
</dbReference>
<dbReference type="NCBIfam" id="NF003661">
    <property type="entry name" value="PRK05291.1-3"/>
    <property type="match status" value="1"/>
</dbReference>
<dbReference type="NCBIfam" id="TIGR00231">
    <property type="entry name" value="small_GTP"/>
    <property type="match status" value="1"/>
</dbReference>
<dbReference type="PANTHER" id="PTHR42714">
    <property type="entry name" value="TRNA MODIFICATION GTPASE GTPBP3"/>
    <property type="match status" value="1"/>
</dbReference>
<dbReference type="PANTHER" id="PTHR42714:SF2">
    <property type="entry name" value="TRNA MODIFICATION GTPASE GTPBP3, MITOCHONDRIAL"/>
    <property type="match status" value="1"/>
</dbReference>
<dbReference type="Pfam" id="PF01926">
    <property type="entry name" value="MMR_HSR1"/>
    <property type="match status" value="1"/>
</dbReference>
<dbReference type="Pfam" id="PF12631">
    <property type="entry name" value="MnmE_helical"/>
    <property type="match status" value="1"/>
</dbReference>
<dbReference type="Pfam" id="PF10396">
    <property type="entry name" value="TrmE_N"/>
    <property type="match status" value="1"/>
</dbReference>
<dbReference type="SUPFAM" id="SSF52540">
    <property type="entry name" value="P-loop containing nucleoside triphosphate hydrolases"/>
    <property type="match status" value="1"/>
</dbReference>
<dbReference type="SUPFAM" id="SSF116878">
    <property type="entry name" value="TrmE connector domain"/>
    <property type="match status" value="1"/>
</dbReference>
<dbReference type="PROSITE" id="PS51709">
    <property type="entry name" value="G_TRME"/>
    <property type="match status" value="1"/>
</dbReference>
<keyword id="KW-0963">Cytoplasm</keyword>
<keyword id="KW-0342">GTP-binding</keyword>
<keyword id="KW-0378">Hydrolase</keyword>
<keyword id="KW-0460">Magnesium</keyword>
<keyword id="KW-0479">Metal-binding</keyword>
<keyword id="KW-0547">Nucleotide-binding</keyword>
<keyword id="KW-0630">Potassium</keyword>
<keyword id="KW-0819">tRNA processing</keyword>
<gene>
    <name evidence="1" type="primary">mnmE</name>
    <name evidence="1" type="synonym">trmE</name>
    <name type="ordered locus">WRi_009300</name>
</gene>
<organism>
    <name type="scientific">Wolbachia sp. subsp. Drosophila simulans (strain wRi)</name>
    <dbReference type="NCBI Taxonomy" id="66084"/>
    <lineage>
        <taxon>Bacteria</taxon>
        <taxon>Pseudomonadati</taxon>
        <taxon>Pseudomonadota</taxon>
        <taxon>Alphaproteobacteria</taxon>
        <taxon>Rickettsiales</taxon>
        <taxon>Anaplasmataceae</taxon>
        <taxon>Wolbachieae</taxon>
        <taxon>Wolbachia</taxon>
    </lineage>
</organism>